<proteinExistence type="evidence at transcript level"/>
<keyword id="KW-0025">Alternative splicing</keyword>
<keyword id="KW-1185">Reference proteome</keyword>
<dbReference type="EMBL" id="BC121457">
    <property type="protein sequence ID" value="AAI21458.1"/>
    <property type="molecule type" value="mRNA"/>
</dbReference>
<dbReference type="EMBL" id="BC135892">
    <property type="protein sequence ID" value="AAI35893.1"/>
    <property type="molecule type" value="mRNA"/>
</dbReference>
<dbReference type="RefSeq" id="NP_001072358.1">
    <molecule id="Q0V9N5-1"/>
    <property type="nucleotide sequence ID" value="NM_001078890.1"/>
</dbReference>
<dbReference type="FunCoup" id="Q0V9N5">
    <property type="interactions" value="1551"/>
</dbReference>
<dbReference type="PaxDb" id="8364-ENSXETP00000062979"/>
<dbReference type="DNASU" id="779811"/>
<dbReference type="GeneID" id="779811"/>
<dbReference type="KEGG" id="xtr:779811"/>
<dbReference type="AGR" id="Xenbase:XB-GENE-5815813"/>
<dbReference type="CTD" id="779811"/>
<dbReference type="Xenbase" id="XB-GENE-5815813">
    <property type="gene designation" value="c3h5orf24"/>
</dbReference>
<dbReference type="eggNOG" id="ENOG502RZTV">
    <property type="taxonomic scope" value="Eukaryota"/>
</dbReference>
<dbReference type="HOGENOM" id="CLU_090677_0_0_1"/>
<dbReference type="InParanoid" id="Q0V9N5"/>
<dbReference type="OMA" id="TAHFDLC"/>
<dbReference type="OrthoDB" id="10072110at2759"/>
<dbReference type="TreeFam" id="TF333072"/>
<dbReference type="Proteomes" id="UP000008143">
    <property type="component" value="Chromosome 3"/>
</dbReference>
<dbReference type="Bgee" id="ENSXETG00000010404">
    <property type="expression patterns" value="Expressed in brain and 12 other cell types or tissues"/>
</dbReference>
<dbReference type="ExpressionAtlas" id="Q0V9N5">
    <property type="expression patterns" value="baseline and differential"/>
</dbReference>
<dbReference type="InterPro" id="IPR040419">
    <property type="entry name" value="DUF5568"/>
</dbReference>
<dbReference type="PANTHER" id="PTHR31894">
    <property type="entry name" value="UPF0461 PROTEIN C5ORF24"/>
    <property type="match status" value="1"/>
</dbReference>
<dbReference type="PANTHER" id="PTHR31894:SF0">
    <property type="entry name" value="UPF0461 PROTEIN C5ORF24"/>
    <property type="match status" value="1"/>
</dbReference>
<dbReference type="Pfam" id="PF17724">
    <property type="entry name" value="DUF5568"/>
    <property type="match status" value="1"/>
</dbReference>
<name>CE024_XENTR</name>
<protein>
    <recommendedName>
        <fullName>UPF0461 protein C5orf24 homolog</fullName>
    </recommendedName>
</protein>
<reference key="1">
    <citation type="submission" date="2006-08" db="EMBL/GenBank/DDBJ databases">
        <authorList>
            <consortium name="NIH - Xenopus Gene Collection (XGC) project"/>
        </authorList>
    </citation>
    <scope>NUCLEOTIDE SEQUENCE [LARGE SCALE MRNA] (ISOFORMS 1 AND 2)</scope>
    <source>
        <tissue>Brain</tissue>
        <tissue>Embryo</tissue>
    </source>
</reference>
<comment type="alternative products">
    <event type="alternative splicing"/>
    <isoform>
        <id>Q0V9N5-1</id>
        <name>1</name>
        <sequence type="displayed"/>
    </isoform>
    <isoform>
        <id>Q0V9N5-2</id>
        <name>2</name>
        <sequence type="described" ref="VSP_027012"/>
    </isoform>
</comment>
<comment type="similarity">
    <text evidence="3">Belongs to the UPF0461 family.</text>
</comment>
<evidence type="ECO:0000256" key="1">
    <source>
        <dbReference type="SAM" id="MobiDB-lite"/>
    </source>
</evidence>
<evidence type="ECO:0000303" key="2">
    <source ref="1"/>
</evidence>
<evidence type="ECO:0000305" key="3"/>
<sequence>MMRPVSSSNVAFCTSGKSSCLNQDTMRGVDQFGLYATQQSKYSHPVTHKNISCQTQETINETHLQTSTSRDLDTKSDLKKKKNLGRSGKRGRPSGTTKSAGYRTSTGRPLGTTKAAGFKTSPGRPLGTTKAAGYKVSPGRPPGSIKALSRLANLGYPSNNAGFSYPTALSRGLHSAVETTLKHPIE</sequence>
<organism>
    <name type="scientific">Xenopus tropicalis</name>
    <name type="common">Western clawed frog</name>
    <name type="synonym">Silurana tropicalis</name>
    <dbReference type="NCBI Taxonomy" id="8364"/>
    <lineage>
        <taxon>Eukaryota</taxon>
        <taxon>Metazoa</taxon>
        <taxon>Chordata</taxon>
        <taxon>Craniata</taxon>
        <taxon>Vertebrata</taxon>
        <taxon>Euteleostomi</taxon>
        <taxon>Amphibia</taxon>
        <taxon>Batrachia</taxon>
        <taxon>Anura</taxon>
        <taxon>Pipoidea</taxon>
        <taxon>Pipidae</taxon>
        <taxon>Xenopodinae</taxon>
        <taxon>Xenopus</taxon>
        <taxon>Silurana</taxon>
    </lineage>
</organism>
<accession>Q0V9N5</accession>
<accession>A4II74</accession>
<feature type="chain" id="PRO_0000295713" description="UPF0461 protein C5orf24 homolog">
    <location>
        <begin position="1"/>
        <end position="186"/>
    </location>
</feature>
<feature type="region of interest" description="Disordered" evidence="1">
    <location>
        <begin position="60"/>
        <end position="140"/>
    </location>
</feature>
<feature type="compositionally biased region" description="Polar residues" evidence="1">
    <location>
        <begin position="60"/>
        <end position="69"/>
    </location>
</feature>
<feature type="compositionally biased region" description="Basic residues" evidence="1">
    <location>
        <begin position="78"/>
        <end position="92"/>
    </location>
</feature>
<feature type="compositionally biased region" description="Polar residues" evidence="1">
    <location>
        <begin position="94"/>
        <end position="107"/>
    </location>
</feature>
<feature type="splice variant" id="VSP_027012" description="In isoform 2." evidence="2">
    <original>SIKALSRLANLGYPSNNAGFSYPTALSRGLHSAVETTLKHPIE</original>
    <variation>KKQQALMCSSDA</variation>
    <location>
        <begin position="144"/>
        <end position="186"/>
    </location>
</feature>